<name>FRI2_VIGUN</name>
<feature type="transit peptide" description="Chloroplast" evidence="2">
    <location>
        <begin position="1"/>
        <end position="43"/>
    </location>
</feature>
<feature type="chain" id="PRO_0000008870" description="Ferritin-2, chloroplastic">
    <location>
        <begin position="44"/>
        <end position="250"/>
    </location>
</feature>
<feature type="domain" description="Ferritin-like diiron" evidence="3">
    <location>
        <begin position="77"/>
        <end position="230"/>
    </location>
</feature>
<feature type="region of interest" description="Extension peptide (EP)">
    <location>
        <begin position="44"/>
        <end position="76"/>
    </location>
</feature>
<feature type="binding site" evidence="3">
    <location>
        <position position="94"/>
    </location>
    <ligand>
        <name>Fe cation</name>
        <dbReference type="ChEBI" id="CHEBI:24875"/>
        <label>1</label>
    </ligand>
</feature>
<feature type="binding site" evidence="3">
    <location>
        <position position="129"/>
    </location>
    <ligand>
        <name>Fe cation</name>
        <dbReference type="ChEBI" id="CHEBI:24875"/>
        <label>1</label>
    </ligand>
</feature>
<feature type="binding site" evidence="3">
    <location>
        <position position="129"/>
    </location>
    <ligand>
        <name>Fe cation</name>
        <dbReference type="ChEBI" id="CHEBI:24875"/>
        <label>2</label>
    </ligand>
</feature>
<feature type="binding site" evidence="3">
    <location>
        <position position="132"/>
    </location>
    <ligand>
        <name>Fe cation</name>
        <dbReference type="ChEBI" id="CHEBI:24875"/>
        <label>1</label>
    </ligand>
</feature>
<feature type="binding site" evidence="3">
    <location>
        <position position="178"/>
    </location>
    <ligand>
        <name>Fe cation</name>
        <dbReference type="ChEBI" id="CHEBI:24875"/>
        <label>2</label>
    </ligand>
</feature>
<feature type="binding site" evidence="3">
    <location>
        <position position="212"/>
    </location>
    <ligand>
        <name>Fe cation</name>
        <dbReference type="ChEBI" id="CHEBI:24875"/>
        <label>2</label>
    </ligand>
</feature>
<accession>Q41709</accession>
<evidence type="ECO:0000250" key="1"/>
<evidence type="ECO:0000255" key="2"/>
<evidence type="ECO:0000255" key="3">
    <source>
        <dbReference type="PROSITE-ProRule" id="PRU00085"/>
    </source>
</evidence>
<evidence type="ECO:0000305" key="4"/>
<gene>
    <name type="primary">PFE2</name>
</gene>
<reference key="1">
    <citation type="journal article" date="1999" name="Biochem. J.">
        <title>Occurrence and expression of members of the ferritin gene family in cowpeas.</title>
        <authorList>
            <person name="Wardrop A.J."/>
            <person name="Wicks R.E."/>
            <person name="Entsch B."/>
        </authorList>
    </citation>
    <scope>NUCLEOTIDE SEQUENCE [MRNA]</scope>
    <source>
        <strain>cv. N41</strain>
        <tissue>Leaf</tissue>
    </source>
</reference>
<reference key="2">
    <citation type="journal article" date="1993" name="Biochem. Biophys. Res. Commun.">
        <title>Functional genes found for three different plant ferritin subunits in the legume, Vigna unguiculata.</title>
        <authorList>
            <person name="Wicks R.E."/>
            <person name="Entsch B."/>
        </authorList>
    </citation>
    <scope>NUCLEOTIDE SEQUENCE OF 53-123</scope>
    <source>
        <strain>cv. N41</strain>
        <tissue>Leaf</tissue>
    </source>
</reference>
<dbReference type="EC" id="1.16.3.1"/>
<dbReference type="EMBL" id="AF052058">
    <property type="protein sequence ID" value="AAC06027.1"/>
    <property type="molecule type" value="mRNA"/>
</dbReference>
<dbReference type="EMBL" id="X67755">
    <property type="protein sequence ID" value="CAA47983.1"/>
    <property type="molecule type" value="Genomic_DNA"/>
</dbReference>
<dbReference type="PIR" id="PQ0614">
    <property type="entry name" value="PQ0614"/>
</dbReference>
<dbReference type="PIR" id="T08124">
    <property type="entry name" value="T08124"/>
</dbReference>
<dbReference type="RefSeq" id="NP_001363037.1">
    <property type="nucleotide sequence ID" value="NM_001376108.1"/>
</dbReference>
<dbReference type="SMR" id="Q41709"/>
<dbReference type="EnsemblPlants" id="Vigun08g164800.1.v1.2">
    <property type="protein sequence ID" value="Vigun08g164800.1.v1.2"/>
    <property type="gene ID" value="Vigun08g164800.v1.2"/>
</dbReference>
<dbReference type="GeneID" id="114194273"/>
<dbReference type="Gramene" id="Vigun08g164800.1.v1.2">
    <property type="protein sequence ID" value="Vigun08g164800.1.v1.2"/>
    <property type="gene ID" value="Vigun08g164800.v1.2"/>
</dbReference>
<dbReference type="OrthoDB" id="186462at2759"/>
<dbReference type="GO" id="GO:0009507">
    <property type="term" value="C:chloroplast"/>
    <property type="evidence" value="ECO:0007669"/>
    <property type="project" value="UniProtKB-SubCell"/>
</dbReference>
<dbReference type="GO" id="GO:0008199">
    <property type="term" value="F:ferric iron binding"/>
    <property type="evidence" value="ECO:0007669"/>
    <property type="project" value="InterPro"/>
</dbReference>
<dbReference type="GO" id="GO:0008198">
    <property type="term" value="F:ferrous iron binding"/>
    <property type="evidence" value="ECO:0007669"/>
    <property type="project" value="TreeGrafter"/>
</dbReference>
<dbReference type="GO" id="GO:0004322">
    <property type="term" value="F:ferroxidase activity"/>
    <property type="evidence" value="ECO:0007669"/>
    <property type="project" value="UniProtKB-EC"/>
</dbReference>
<dbReference type="GO" id="GO:0006879">
    <property type="term" value="P:intracellular iron ion homeostasis"/>
    <property type="evidence" value="ECO:0007669"/>
    <property type="project" value="UniProtKB-KW"/>
</dbReference>
<dbReference type="GO" id="GO:0006826">
    <property type="term" value="P:iron ion transport"/>
    <property type="evidence" value="ECO:0007669"/>
    <property type="project" value="InterPro"/>
</dbReference>
<dbReference type="CDD" id="cd01056">
    <property type="entry name" value="Euk_Ferritin"/>
    <property type="match status" value="1"/>
</dbReference>
<dbReference type="FunFam" id="1.20.1260.10:FF:000006">
    <property type="entry name" value="Ferritin"/>
    <property type="match status" value="1"/>
</dbReference>
<dbReference type="Gene3D" id="1.20.1260.10">
    <property type="match status" value="1"/>
</dbReference>
<dbReference type="InterPro" id="IPR001519">
    <property type="entry name" value="Ferritin"/>
</dbReference>
<dbReference type="InterPro" id="IPR012347">
    <property type="entry name" value="Ferritin-like"/>
</dbReference>
<dbReference type="InterPro" id="IPR009040">
    <property type="entry name" value="Ferritin-like_diiron"/>
</dbReference>
<dbReference type="InterPro" id="IPR009078">
    <property type="entry name" value="Ferritin-like_SF"/>
</dbReference>
<dbReference type="InterPro" id="IPR014034">
    <property type="entry name" value="Ferritin_CS"/>
</dbReference>
<dbReference type="InterPro" id="IPR008331">
    <property type="entry name" value="Ferritin_DPS_dom"/>
</dbReference>
<dbReference type="PANTHER" id="PTHR11431">
    <property type="entry name" value="FERRITIN"/>
    <property type="match status" value="1"/>
</dbReference>
<dbReference type="PANTHER" id="PTHR11431:SF75">
    <property type="entry name" value="FERRITIN"/>
    <property type="match status" value="1"/>
</dbReference>
<dbReference type="Pfam" id="PF00210">
    <property type="entry name" value="Ferritin"/>
    <property type="match status" value="1"/>
</dbReference>
<dbReference type="SUPFAM" id="SSF47240">
    <property type="entry name" value="Ferritin-like"/>
    <property type="match status" value="1"/>
</dbReference>
<dbReference type="PROSITE" id="PS00204">
    <property type="entry name" value="FERRITIN_2"/>
    <property type="match status" value="1"/>
</dbReference>
<dbReference type="PROSITE" id="PS50905">
    <property type="entry name" value="FERRITIN_LIKE"/>
    <property type="match status" value="1"/>
</dbReference>
<protein>
    <recommendedName>
        <fullName>Ferritin-2, chloroplastic</fullName>
        <ecNumber>1.16.3.1</ecNumber>
    </recommendedName>
</protein>
<proteinExistence type="evidence at transcript level"/>
<organism>
    <name type="scientific">Vigna unguiculata</name>
    <name type="common">Cowpea</name>
    <dbReference type="NCBI Taxonomy" id="3917"/>
    <lineage>
        <taxon>Eukaryota</taxon>
        <taxon>Viridiplantae</taxon>
        <taxon>Streptophyta</taxon>
        <taxon>Embryophyta</taxon>
        <taxon>Tracheophyta</taxon>
        <taxon>Spermatophyta</taxon>
        <taxon>Magnoliopsida</taxon>
        <taxon>eudicotyledons</taxon>
        <taxon>Gunneridae</taxon>
        <taxon>Pentapetalae</taxon>
        <taxon>rosids</taxon>
        <taxon>fabids</taxon>
        <taxon>Fabales</taxon>
        <taxon>Fabaceae</taxon>
        <taxon>Papilionoideae</taxon>
        <taxon>50 kb inversion clade</taxon>
        <taxon>NPAAA clade</taxon>
        <taxon>indigoferoid/millettioid clade</taxon>
        <taxon>Phaseoleae</taxon>
        <taxon>Vigna</taxon>
    </lineage>
</organism>
<comment type="function">
    <text evidence="1">Stores iron in a soluble, non-toxic, readily available form. Important for iron homeostasis. Has ferroxidase activity. Iron is taken up in the ferrous form and deposited as ferric hydroxides after oxidation (By similarity).</text>
</comment>
<comment type="catalytic activity">
    <reaction>
        <text>4 Fe(2+) + O2 + 4 H(+) = 4 Fe(3+) + 2 H2O</text>
        <dbReference type="Rhea" id="RHEA:11148"/>
        <dbReference type="ChEBI" id="CHEBI:15377"/>
        <dbReference type="ChEBI" id="CHEBI:15378"/>
        <dbReference type="ChEBI" id="CHEBI:15379"/>
        <dbReference type="ChEBI" id="CHEBI:29033"/>
        <dbReference type="ChEBI" id="CHEBI:29034"/>
        <dbReference type="EC" id="1.16.3.1"/>
    </reaction>
</comment>
<comment type="subunit">
    <text evidence="1">Oligomer of 24 subunits. There are two types of subunits: L (light) chain and H (heavy) chain. The major chain can be light or heavy, depending on the species and tissue type. The functional molecule forms a roughly spherical shell with a diameter of 12 nm and contains a central cavity into which the insoluble mineral iron core is deposited (By similarity).</text>
</comment>
<comment type="subcellular location">
    <subcellularLocation>
        <location>Plastid</location>
        <location>Chloroplast</location>
    </subcellularLocation>
</comment>
<comment type="similarity">
    <text evidence="4">Belongs to the ferritin family.</text>
</comment>
<sequence length="250" mass="28041">MLLRTAAASSLSLFNPNAEPSRSVPVLANNASRLVVRAAKGSTNHRALTGVIFEPFEEVKKELDLVPTVPQASLARQKYVDESEAAVNEQINVEYNVSYVYHALFAYFDRDNVALRGLAKFFKESSEEEREHAEKLMEYQNRRGGKVKLQSIVMPLSEFDHADKGDALHAMELALSLEKLTNEKLLHLHSVATKNGDVQLADFVESEFLGEQVESIKRISEYVAQLRRVGKGHGVWHFDQMLLHEGGHLA</sequence>
<keyword id="KW-0150">Chloroplast</keyword>
<keyword id="KW-0408">Iron</keyword>
<keyword id="KW-0409">Iron storage</keyword>
<keyword id="KW-0479">Metal-binding</keyword>
<keyword id="KW-0560">Oxidoreductase</keyword>
<keyword id="KW-0934">Plastid</keyword>
<keyword id="KW-0809">Transit peptide</keyword>